<name>RECN_HELPJ</name>
<gene>
    <name type="primary">recN</name>
    <name type="ordered locus">jhp_1434</name>
</gene>
<comment type="function">
    <text evidence="1">May be involved in recombinational repair of damaged DNA.</text>
</comment>
<comment type="similarity">
    <text evidence="3">Belongs to the RecN family.</text>
</comment>
<proteinExistence type="inferred from homology"/>
<reference key="1">
    <citation type="journal article" date="1999" name="Nature">
        <title>Genomic sequence comparison of two unrelated isolates of the human gastric pathogen Helicobacter pylori.</title>
        <authorList>
            <person name="Alm R.A."/>
            <person name="Ling L.-S.L."/>
            <person name="Moir D.T."/>
            <person name="King B.L."/>
            <person name="Brown E.D."/>
            <person name="Doig P.C."/>
            <person name="Smith D.R."/>
            <person name="Noonan B."/>
            <person name="Guild B.C."/>
            <person name="deJonge B.L."/>
            <person name="Carmel G."/>
            <person name="Tummino P.J."/>
            <person name="Caruso A."/>
            <person name="Uria-Nickelsen M."/>
            <person name="Mills D.M."/>
            <person name="Ives C."/>
            <person name="Gibson R."/>
            <person name="Merberg D."/>
            <person name="Mills S.D."/>
            <person name="Jiang Q."/>
            <person name="Taylor D.E."/>
            <person name="Vovis G.F."/>
            <person name="Trust T.J."/>
        </authorList>
    </citation>
    <scope>NUCLEOTIDE SEQUENCE [LARGE SCALE GENOMIC DNA]</scope>
    <source>
        <strain>J99 / ATCC 700824</strain>
    </source>
</reference>
<dbReference type="EMBL" id="AE001439">
    <property type="protein sequence ID" value="AAD07019.1"/>
    <property type="molecule type" value="Genomic_DNA"/>
</dbReference>
<dbReference type="PIR" id="B71807">
    <property type="entry name" value="B71807"/>
</dbReference>
<dbReference type="RefSeq" id="WP_001204511.1">
    <property type="nucleotide sequence ID" value="NC_000921.1"/>
</dbReference>
<dbReference type="SMR" id="Q9ZJ80"/>
<dbReference type="KEGG" id="hpj:jhp_1434"/>
<dbReference type="PATRIC" id="fig|85963.30.peg.1110"/>
<dbReference type="eggNOG" id="COG0497">
    <property type="taxonomic scope" value="Bacteria"/>
</dbReference>
<dbReference type="Proteomes" id="UP000000804">
    <property type="component" value="Chromosome"/>
</dbReference>
<dbReference type="GO" id="GO:0043590">
    <property type="term" value="C:bacterial nucleoid"/>
    <property type="evidence" value="ECO:0007669"/>
    <property type="project" value="TreeGrafter"/>
</dbReference>
<dbReference type="GO" id="GO:0005524">
    <property type="term" value="F:ATP binding"/>
    <property type="evidence" value="ECO:0007669"/>
    <property type="project" value="UniProtKB-KW"/>
</dbReference>
<dbReference type="GO" id="GO:0006310">
    <property type="term" value="P:DNA recombination"/>
    <property type="evidence" value="ECO:0007669"/>
    <property type="project" value="InterPro"/>
</dbReference>
<dbReference type="GO" id="GO:0006281">
    <property type="term" value="P:DNA repair"/>
    <property type="evidence" value="ECO:0007669"/>
    <property type="project" value="UniProtKB-KW"/>
</dbReference>
<dbReference type="GO" id="GO:0009432">
    <property type="term" value="P:SOS response"/>
    <property type="evidence" value="ECO:0007669"/>
    <property type="project" value="TreeGrafter"/>
</dbReference>
<dbReference type="Gene3D" id="3.40.50.300">
    <property type="entry name" value="P-loop containing nucleotide triphosphate hydrolases"/>
    <property type="match status" value="2"/>
</dbReference>
<dbReference type="InterPro" id="IPR004604">
    <property type="entry name" value="DNA_recomb/repair_RecN"/>
</dbReference>
<dbReference type="InterPro" id="IPR027417">
    <property type="entry name" value="P-loop_NTPase"/>
</dbReference>
<dbReference type="InterPro" id="IPR003395">
    <property type="entry name" value="RecF/RecN/SMC_N"/>
</dbReference>
<dbReference type="PANTHER" id="PTHR11059">
    <property type="entry name" value="DNA REPAIR PROTEIN RECN"/>
    <property type="match status" value="1"/>
</dbReference>
<dbReference type="PANTHER" id="PTHR11059:SF0">
    <property type="entry name" value="DNA REPAIR PROTEIN RECN"/>
    <property type="match status" value="1"/>
</dbReference>
<dbReference type="Pfam" id="PF02463">
    <property type="entry name" value="SMC_N"/>
    <property type="match status" value="1"/>
</dbReference>
<dbReference type="PIRSF" id="PIRSF003128">
    <property type="entry name" value="RecN"/>
    <property type="match status" value="1"/>
</dbReference>
<dbReference type="SUPFAM" id="SSF52540">
    <property type="entry name" value="P-loop containing nucleoside triphosphate hydrolases"/>
    <property type="match status" value="1"/>
</dbReference>
<organism>
    <name type="scientific">Helicobacter pylori (strain J99 / ATCC 700824)</name>
    <name type="common">Campylobacter pylori J99</name>
    <dbReference type="NCBI Taxonomy" id="85963"/>
    <lineage>
        <taxon>Bacteria</taxon>
        <taxon>Pseudomonadati</taxon>
        <taxon>Campylobacterota</taxon>
        <taxon>Epsilonproteobacteria</taxon>
        <taxon>Campylobacterales</taxon>
        <taxon>Helicobacteraceae</taxon>
        <taxon>Helicobacter</taxon>
    </lineage>
</organism>
<feature type="chain" id="PRO_0000188020" description="DNA repair protein RecN">
    <location>
        <begin position="1"/>
        <end position="522"/>
    </location>
</feature>
<feature type="binding site" evidence="2">
    <location>
        <begin position="36"/>
        <end position="43"/>
    </location>
    <ligand>
        <name>ATP</name>
        <dbReference type="ChEBI" id="CHEBI:30616"/>
    </ligand>
</feature>
<protein>
    <recommendedName>
        <fullName>DNA repair protein RecN</fullName>
    </recommendedName>
    <alternativeName>
        <fullName>Recombination protein N</fullName>
    </alternativeName>
</protein>
<keyword id="KW-0067">ATP-binding</keyword>
<keyword id="KW-0227">DNA damage</keyword>
<keyword id="KW-0234">DNA repair</keyword>
<keyword id="KW-0547">Nucleotide-binding</keyword>
<accession>Q9ZJ80</accession>
<sequence>MRDFNNIQITRLKVRQNAVFEKLDLEFKDGLSAISGASGVGKSVLIASLLGAFGLKESNASNIEVELIAPFLDTEEYGIFREDEHEPLVISVIKKEKTRYFLNQTSLSKNTLKALLKGLIKRLSNDRFSQNELNDILMLSLLDGYIQNKNKAFSPLLDALETKFTRLEKLERERRSLEDKKRFQKDLEERLNFEKMKLERLDLKEDEYERLLEQKKLLSSKEKLNDKIALALDVLENTHKITHALESVGHSAEFLKSALLEAGALLEKEQAKLEECERLDIEKVLEKLGMLSGIIKDYGSIAHAKERLGHVKNELHNLKEIDHHCETYHKEIERLKTECLKLCEEISGFRKEYLAGFNALLSAKAKDLLLKSPSLVLEEAPMSEKGAQKLVLHLQNSQLETLSSGEYSRLRLAFMLLEMEFLKDFKGVLVLDEMDSNLSGEESLAVSKALETLSSHSQIFAISHQVHIPAVAKNHILVFKENHKSLAKTLNNEERVLEIARMIGGSENIESAISFAKEKLKV</sequence>
<evidence type="ECO:0000250" key="1"/>
<evidence type="ECO:0000255" key="2"/>
<evidence type="ECO:0000305" key="3"/>